<comment type="function">
    <text evidence="1">Major role in the synthesis of nucleoside triphosphates other than ATP. The ATP gamma phosphate is transferred to the NDP beta phosphate via a ping-pong mechanism, using a phosphorylated active-site intermediate.</text>
</comment>
<comment type="catalytic activity">
    <reaction evidence="1">
        <text>a 2'-deoxyribonucleoside 5'-diphosphate + ATP = a 2'-deoxyribonucleoside 5'-triphosphate + ADP</text>
        <dbReference type="Rhea" id="RHEA:44640"/>
        <dbReference type="ChEBI" id="CHEBI:30616"/>
        <dbReference type="ChEBI" id="CHEBI:61560"/>
        <dbReference type="ChEBI" id="CHEBI:73316"/>
        <dbReference type="ChEBI" id="CHEBI:456216"/>
        <dbReference type="EC" id="2.7.4.6"/>
    </reaction>
</comment>
<comment type="catalytic activity">
    <reaction evidence="1">
        <text>a ribonucleoside 5'-diphosphate + ATP = a ribonucleoside 5'-triphosphate + ADP</text>
        <dbReference type="Rhea" id="RHEA:18113"/>
        <dbReference type="ChEBI" id="CHEBI:30616"/>
        <dbReference type="ChEBI" id="CHEBI:57930"/>
        <dbReference type="ChEBI" id="CHEBI:61557"/>
        <dbReference type="ChEBI" id="CHEBI:456216"/>
        <dbReference type="EC" id="2.7.4.6"/>
    </reaction>
</comment>
<comment type="cofactor">
    <cofactor evidence="1">
        <name>Mg(2+)</name>
        <dbReference type="ChEBI" id="CHEBI:18420"/>
    </cofactor>
</comment>
<comment type="subunit">
    <text evidence="1">Homotetramer.</text>
</comment>
<comment type="subcellular location">
    <subcellularLocation>
        <location evidence="1">Cytoplasm</location>
    </subcellularLocation>
</comment>
<comment type="similarity">
    <text evidence="1">Belongs to the NDK family.</text>
</comment>
<feature type="chain" id="PRO_1000026291" description="Nucleoside diphosphate kinase">
    <location>
        <begin position="1"/>
        <end position="143"/>
    </location>
</feature>
<feature type="active site" description="Pros-phosphohistidine intermediate" evidence="1">
    <location>
        <position position="117"/>
    </location>
</feature>
<feature type="binding site" evidence="1">
    <location>
        <position position="11"/>
    </location>
    <ligand>
        <name>ATP</name>
        <dbReference type="ChEBI" id="CHEBI:30616"/>
    </ligand>
</feature>
<feature type="binding site" evidence="1">
    <location>
        <position position="59"/>
    </location>
    <ligand>
        <name>ATP</name>
        <dbReference type="ChEBI" id="CHEBI:30616"/>
    </ligand>
</feature>
<feature type="binding site" evidence="1">
    <location>
        <position position="87"/>
    </location>
    <ligand>
        <name>ATP</name>
        <dbReference type="ChEBI" id="CHEBI:30616"/>
    </ligand>
</feature>
<feature type="binding site" evidence="1">
    <location>
        <position position="93"/>
    </location>
    <ligand>
        <name>ATP</name>
        <dbReference type="ChEBI" id="CHEBI:30616"/>
    </ligand>
</feature>
<feature type="binding site" evidence="1">
    <location>
        <position position="104"/>
    </location>
    <ligand>
        <name>ATP</name>
        <dbReference type="ChEBI" id="CHEBI:30616"/>
    </ligand>
</feature>
<feature type="binding site" evidence="1">
    <location>
        <position position="114"/>
    </location>
    <ligand>
        <name>ATP</name>
        <dbReference type="ChEBI" id="CHEBI:30616"/>
    </ligand>
</feature>
<organism>
    <name type="scientific">Shewanella amazonensis (strain ATCC BAA-1098 / SB2B)</name>
    <dbReference type="NCBI Taxonomy" id="326297"/>
    <lineage>
        <taxon>Bacteria</taxon>
        <taxon>Pseudomonadati</taxon>
        <taxon>Pseudomonadota</taxon>
        <taxon>Gammaproteobacteria</taxon>
        <taxon>Alteromonadales</taxon>
        <taxon>Shewanellaceae</taxon>
        <taxon>Shewanella</taxon>
    </lineage>
</organism>
<keyword id="KW-0067">ATP-binding</keyword>
<keyword id="KW-0963">Cytoplasm</keyword>
<keyword id="KW-0418">Kinase</keyword>
<keyword id="KW-0460">Magnesium</keyword>
<keyword id="KW-0479">Metal-binding</keyword>
<keyword id="KW-0546">Nucleotide metabolism</keyword>
<keyword id="KW-0547">Nucleotide-binding</keyword>
<keyword id="KW-0597">Phosphoprotein</keyword>
<keyword id="KW-1185">Reference proteome</keyword>
<keyword id="KW-0808">Transferase</keyword>
<sequence>MAIERTFSIIKPDAVAKNHIGAIYNRFESAGLKIIAAKMVHLTKEQAEGFYAEHSERPFFGALVSFMTSGPIMVQVLEGENAVLANREIMGATNPAQAARGTLRADYAASIDENAVHGSDALASAEREIAYFFAADELCPRTR</sequence>
<reference key="1">
    <citation type="submission" date="2006-12" db="EMBL/GenBank/DDBJ databases">
        <title>Complete sequence of Shewanella amazonensis SB2B.</title>
        <authorList>
            <consortium name="US DOE Joint Genome Institute"/>
            <person name="Copeland A."/>
            <person name="Lucas S."/>
            <person name="Lapidus A."/>
            <person name="Barry K."/>
            <person name="Detter J.C."/>
            <person name="Glavina del Rio T."/>
            <person name="Hammon N."/>
            <person name="Israni S."/>
            <person name="Dalin E."/>
            <person name="Tice H."/>
            <person name="Pitluck S."/>
            <person name="Munk A.C."/>
            <person name="Brettin T."/>
            <person name="Bruce D."/>
            <person name="Han C."/>
            <person name="Tapia R."/>
            <person name="Gilna P."/>
            <person name="Schmutz J."/>
            <person name="Larimer F."/>
            <person name="Land M."/>
            <person name="Hauser L."/>
            <person name="Kyrpides N."/>
            <person name="Mikhailova N."/>
            <person name="Fredrickson J."/>
            <person name="Richardson P."/>
        </authorList>
    </citation>
    <scope>NUCLEOTIDE SEQUENCE [LARGE SCALE GENOMIC DNA]</scope>
    <source>
        <strain>ATCC BAA-1098 / SB2B</strain>
    </source>
</reference>
<dbReference type="EC" id="2.7.4.6" evidence="1"/>
<dbReference type="EMBL" id="CP000507">
    <property type="protein sequence ID" value="ABL99508.1"/>
    <property type="molecule type" value="Genomic_DNA"/>
</dbReference>
<dbReference type="RefSeq" id="WP_011759417.1">
    <property type="nucleotide sequence ID" value="NC_008700.1"/>
</dbReference>
<dbReference type="SMR" id="A1S552"/>
<dbReference type="STRING" id="326297.Sama_1301"/>
<dbReference type="KEGG" id="saz:Sama_1301"/>
<dbReference type="eggNOG" id="COG0105">
    <property type="taxonomic scope" value="Bacteria"/>
</dbReference>
<dbReference type="HOGENOM" id="CLU_060216_8_1_6"/>
<dbReference type="OrthoDB" id="9801161at2"/>
<dbReference type="Proteomes" id="UP000009175">
    <property type="component" value="Chromosome"/>
</dbReference>
<dbReference type="GO" id="GO:0005737">
    <property type="term" value="C:cytoplasm"/>
    <property type="evidence" value="ECO:0007669"/>
    <property type="project" value="UniProtKB-SubCell"/>
</dbReference>
<dbReference type="GO" id="GO:0005524">
    <property type="term" value="F:ATP binding"/>
    <property type="evidence" value="ECO:0007669"/>
    <property type="project" value="UniProtKB-UniRule"/>
</dbReference>
<dbReference type="GO" id="GO:0046872">
    <property type="term" value="F:metal ion binding"/>
    <property type="evidence" value="ECO:0007669"/>
    <property type="project" value="UniProtKB-KW"/>
</dbReference>
<dbReference type="GO" id="GO:0004550">
    <property type="term" value="F:nucleoside diphosphate kinase activity"/>
    <property type="evidence" value="ECO:0007669"/>
    <property type="project" value="UniProtKB-UniRule"/>
</dbReference>
<dbReference type="GO" id="GO:0006241">
    <property type="term" value="P:CTP biosynthetic process"/>
    <property type="evidence" value="ECO:0007669"/>
    <property type="project" value="UniProtKB-UniRule"/>
</dbReference>
<dbReference type="GO" id="GO:0006183">
    <property type="term" value="P:GTP biosynthetic process"/>
    <property type="evidence" value="ECO:0007669"/>
    <property type="project" value="UniProtKB-UniRule"/>
</dbReference>
<dbReference type="GO" id="GO:0006228">
    <property type="term" value="P:UTP biosynthetic process"/>
    <property type="evidence" value="ECO:0007669"/>
    <property type="project" value="UniProtKB-UniRule"/>
</dbReference>
<dbReference type="CDD" id="cd04413">
    <property type="entry name" value="NDPk_I"/>
    <property type="match status" value="1"/>
</dbReference>
<dbReference type="FunFam" id="3.30.70.141:FF:000001">
    <property type="entry name" value="Nucleoside diphosphate kinase"/>
    <property type="match status" value="1"/>
</dbReference>
<dbReference type="Gene3D" id="3.30.70.141">
    <property type="entry name" value="Nucleoside diphosphate kinase-like domain"/>
    <property type="match status" value="1"/>
</dbReference>
<dbReference type="HAMAP" id="MF_00451">
    <property type="entry name" value="NDP_kinase"/>
    <property type="match status" value="1"/>
</dbReference>
<dbReference type="InterPro" id="IPR034907">
    <property type="entry name" value="NDK-like_dom"/>
</dbReference>
<dbReference type="InterPro" id="IPR036850">
    <property type="entry name" value="NDK-like_dom_sf"/>
</dbReference>
<dbReference type="InterPro" id="IPR001564">
    <property type="entry name" value="Nucleoside_diP_kinase"/>
</dbReference>
<dbReference type="InterPro" id="IPR023005">
    <property type="entry name" value="Nucleoside_diP_kinase_AS"/>
</dbReference>
<dbReference type="NCBIfam" id="NF001908">
    <property type="entry name" value="PRK00668.1"/>
    <property type="match status" value="1"/>
</dbReference>
<dbReference type="PANTHER" id="PTHR46161">
    <property type="entry name" value="NUCLEOSIDE DIPHOSPHATE KINASE"/>
    <property type="match status" value="1"/>
</dbReference>
<dbReference type="PANTHER" id="PTHR46161:SF3">
    <property type="entry name" value="NUCLEOSIDE DIPHOSPHATE KINASE DDB_G0292928-RELATED"/>
    <property type="match status" value="1"/>
</dbReference>
<dbReference type="Pfam" id="PF00334">
    <property type="entry name" value="NDK"/>
    <property type="match status" value="1"/>
</dbReference>
<dbReference type="PRINTS" id="PR01243">
    <property type="entry name" value="NUCDPKINASE"/>
</dbReference>
<dbReference type="SMART" id="SM00562">
    <property type="entry name" value="NDK"/>
    <property type="match status" value="1"/>
</dbReference>
<dbReference type="SUPFAM" id="SSF54919">
    <property type="entry name" value="Nucleoside diphosphate kinase, NDK"/>
    <property type="match status" value="1"/>
</dbReference>
<dbReference type="PROSITE" id="PS00469">
    <property type="entry name" value="NDPK"/>
    <property type="match status" value="1"/>
</dbReference>
<dbReference type="PROSITE" id="PS51374">
    <property type="entry name" value="NDPK_LIKE"/>
    <property type="match status" value="1"/>
</dbReference>
<evidence type="ECO:0000255" key="1">
    <source>
        <dbReference type="HAMAP-Rule" id="MF_00451"/>
    </source>
</evidence>
<name>NDK_SHEAM</name>
<protein>
    <recommendedName>
        <fullName evidence="1">Nucleoside diphosphate kinase</fullName>
        <shortName evidence="1">NDK</shortName>
        <shortName evidence="1">NDP kinase</shortName>
        <ecNumber evidence="1">2.7.4.6</ecNumber>
    </recommendedName>
    <alternativeName>
        <fullName evidence="1">Nucleoside-2-P kinase</fullName>
    </alternativeName>
</protein>
<proteinExistence type="inferred from homology"/>
<accession>A1S552</accession>
<gene>
    <name evidence="1" type="primary">ndk</name>
    <name type="ordered locus">Sama_1301</name>
</gene>